<feature type="chain" id="PRO_0000305845" description="Bifunctional protein FolD">
    <location>
        <begin position="1"/>
        <end position="288"/>
    </location>
</feature>
<feature type="binding site" evidence="1">
    <location>
        <begin position="168"/>
        <end position="170"/>
    </location>
    <ligand>
        <name>NADP(+)</name>
        <dbReference type="ChEBI" id="CHEBI:58349"/>
    </ligand>
</feature>
<feature type="binding site" evidence="1">
    <location>
        <position position="195"/>
    </location>
    <ligand>
        <name>NADP(+)</name>
        <dbReference type="ChEBI" id="CHEBI:58349"/>
    </ligand>
</feature>
<feature type="binding site" evidence="1">
    <location>
        <position position="236"/>
    </location>
    <ligand>
        <name>NADP(+)</name>
        <dbReference type="ChEBI" id="CHEBI:58349"/>
    </ligand>
</feature>
<sequence length="288" mass="30414">MSGVGAITLDGKATRDEIFVDLKERVAALTEQGRTPGLGTVLVGDDPGSQAYVRGKHSDCAKVGINSIRRDLPADISQAELDATIDELNANPECTGYIVQLPLPKHLDENAALERIDPGKDADGLHPTNLGRLVLNEPAPLPCTPRGIVHLLRRYEVEIAGAHVVVIGRGVTVGRPLGLLLTRRSENATVTLCHTATRHLPQFTREADIIVAAAGVPHMVTAEMVRPGAAVIDVGVSRDDNGKLVGDVAPDVWEVAGHVSPNPGGVGPLTRAFLLTNVVERAEALARG</sequence>
<reference key="1">
    <citation type="submission" date="2007-02" db="EMBL/GenBank/DDBJ databases">
        <title>Complete sequence of Mycobacterium sp. JLS.</title>
        <authorList>
            <consortium name="US DOE Joint Genome Institute"/>
            <person name="Copeland A."/>
            <person name="Lucas S."/>
            <person name="Lapidus A."/>
            <person name="Barry K."/>
            <person name="Detter J.C."/>
            <person name="Glavina del Rio T."/>
            <person name="Hammon N."/>
            <person name="Israni S."/>
            <person name="Dalin E."/>
            <person name="Tice H."/>
            <person name="Pitluck S."/>
            <person name="Chain P."/>
            <person name="Malfatti S."/>
            <person name="Shin M."/>
            <person name="Vergez L."/>
            <person name="Schmutz J."/>
            <person name="Larimer F."/>
            <person name="Land M."/>
            <person name="Hauser L."/>
            <person name="Kyrpides N."/>
            <person name="Mikhailova N."/>
            <person name="Miller C.D."/>
            <person name="Anderson A.J."/>
            <person name="Sims R.C."/>
            <person name="Richardson P."/>
        </authorList>
    </citation>
    <scope>NUCLEOTIDE SEQUENCE [LARGE SCALE GENOMIC DNA]</scope>
    <source>
        <strain>JLS</strain>
    </source>
</reference>
<dbReference type="EC" id="1.5.1.5" evidence="1"/>
<dbReference type="EC" id="3.5.4.9" evidence="1"/>
<dbReference type="EMBL" id="CP000580">
    <property type="protein sequence ID" value="ABN97033.1"/>
    <property type="molecule type" value="Genomic_DNA"/>
</dbReference>
<dbReference type="SMR" id="A3PVV6"/>
<dbReference type="KEGG" id="mjl:Mjls_1231"/>
<dbReference type="HOGENOM" id="CLU_034045_3_0_11"/>
<dbReference type="BioCyc" id="MSP164757:G1G8C-1243-MONOMER"/>
<dbReference type="UniPathway" id="UPA00193"/>
<dbReference type="GO" id="GO:0005829">
    <property type="term" value="C:cytosol"/>
    <property type="evidence" value="ECO:0007669"/>
    <property type="project" value="TreeGrafter"/>
</dbReference>
<dbReference type="GO" id="GO:0004477">
    <property type="term" value="F:methenyltetrahydrofolate cyclohydrolase activity"/>
    <property type="evidence" value="ECO:0007669"/>
    <property type="project" value="UniProtKB-UniRule"/>
</dbReference>
<dbReference type="GO" id="GO:0004488">
    <property type="term" value="F:methylenetetrahydrofolate dehydrogenase (NADP+) activity"/>
    <property type="evidence" value="ECO:0007669"/>
    <property type="project" value="UniProtKB-UniRule"/>
</dbReference>
<dbReference type="GO" id="GO:0000105">
    <property type="term" value="P:L-histidine biosynthetic process"/>
    <property type="evidence" value="ECO:0007669"/>
    <property type="project" value="UniProtKB-KW"/>
</dbReference>
<dbReference type="GO" id="GO:0009086">
    <property type="term" value="P:methionine biosynthetic process"/>
    <property type="evidence" value="ECO:0007669"/>
    <property type="project" value="UniProtKB-KW"/>
</dbReference>
<dbReference type="GO" id="GO:0006164">
    <property type="term" value="P:purine nucleotide biosynthetic process"/>
    <property type="evidence" value="ECO:0007669"/>
    <property type="project" value="UniProtKB-KW"/>
</dbReference>
<dbReference type="GO" id="GO:0035999">
    <property type="term" value="P:tetrahydrofolate interconversion"/>
    <property type="evidence" value="ECO:0007669"/>
    <property type="project" value="UniProtKB-UniRule"/>
</dbReference>
<dbReference type="CDD" id="cd01080">
    <property type="entry name" value="NAD_bind_m-THF_DH_Cyclohyd"/>
    <property type="match status" value="1"/>
</dbReference>
<dbReference type="FunFam" id="3.40.50.720:FF:000094">
    <property type="entry name" value="Bifunctional protein FolD"/>
    <property type="match status" value="1"/>
</dbReference>
<dbReference type="FunFam" id="3.40.50.10860:FF:000005">
    <property type="entry name" value="C-1-tetrahydrofolate synthase, cytoplasmic, putative"/>
    <property type="match status" value="1"/>
</dbReference>
<dbReference type="Gene3D" id="3.40.50.10860">
    <property type="entry name" value="Leucine Dehydrogenase, chain A, domain 1"/>
    <property type="match status" value="1"/>
</dbReference>
<dbReference type="Gene3D" id="3.40.50.720">
    <property type="entry name" value="NAD(P)-binding Rossmann-like Domain"/>
    <property type="match status" value="1"/>
</dbReference>
<dbReference type="HAMAP" id="MF_01576">
    <property type="entry name" value="THF_DHG_CYH"/>
    <property type="match status" value="1"/>
</dbReference>
<dbReference type="InterPro" id="IPR046346">
    <property type="entry name" value="Aminoacid_DH-like_N_sf"/>
</dbReference>
<dbReference type="InterPro" id="IPR036291">
    <property type="entry name" value="NAD(P)-bd_dom_sf"/>
</dbReference>
<dbReference type="InterPro" id="IPR000672">
    <property type="entry name" value="THF_DH/CycHdrlase"/>
</dbReference>
<dbReference type="InterPro" id="IPR020630">
    <property type="entry name" value="THF_DH/CycHdrlase_cat_dom"/>
</dbReference>
<dbReference type="InterPro" id="IPR020631">
    <property type="entry name" value="THF_DH/CycHdrlase_NAD-bd_dom"/>
</dbReference>
<dbReference type="NCBIfam" id="NF010789">
    <property type="entry name" value="PRK14193.1"/>
    <property type="match status" value="1"/>
</dbReference>
<dbReference type="PANTHER" id="PTHR48099:SF5">
    <property type="entry name" value="C-1-TETRAHYDROFOLATE SYNTHASE, CYTOPLASMIC"/>
    <property type="match status" value="1"/>
</dbReference>
<dbReference type="PANTHER" id="PTHR48099">
    <property type="entry name" value="C-1-TETRAHYDROFOLATE SYNTHASE, CYTOPLASMIC-RELATED"/>
    <property type="match status" value="1"/>
</dbReference>
<dbReference type="Pfam" id="PF00763">
    <property type="entry name" value="THF_DHG_CYH"/>
    <property type="match status" value="1"/>
</dbReference>
<dbReference type="Pfam" id="PF02882">
    <property type="entry name" value="THF_DHG_CYH_C"/>
    <property type="match status" value="1"/>
</dbReference>
<dbReference type="PRINTS" id="PR00085">
    <property type="entry name" value="THFDHDRGNASE"/>
</dbReference>
<dbReference type="SUPFAM" id="SSF53223">
    <property type="entry name" value="Aminoacid dehydrogenase-like, N-terminal domain"/>
    <property type="match status" value="1"/>
</dbReference>
<dbReference type="SUPFAM" id="SSF51735">
    <property type="entry name" value="NAD(P)-binding Rossmann-fold domains"/>
    <property type="match status" value="1"/>
</dbReference>
<name>FOLD_MYCSJ</name>
<proteinExistence type="inferred from homology"/>
<keyword id="KW-0028">Amino-acid biosynthesis</keyword>
<keyword id="KW-0368">Histidine biosynthesis</keyword>
<keyword id="KW-0378">Hydrolase</keyword>
<keyword id="KW-0486">Methionine biosynthesis</keyword>
<keyword id="KW-0511">Multifunctional enzyme</keyword>
<keyword id="KW-0521">NADP</keyword>
<keyword id="KW-0554">One-carbon metabolism</keyword>
<keyword id="KW-0560">Oxidoreductase</keyword>
<keyword id="KW-0658">Purine biosynthesis</keyword>
<evidence type="ECO:0000255" key="1">
    <source>
        <dbReference type="HAMAP-Rule" id="MF_01576"/>
    </source>
</evidence>
<organism>
    <name type="scientific">Mycobacterium sp. (strain JLS)</name>
    <dbReference type="NCBI Taxonomy" id="164757"/>
    <lineage>
        <taxon>Bacteria</taxon>
        <taxon>Bacillati</taxon>
        <taxon>Actinomycetota</taxon>
        <taxon>Actinomycetes</taxon>
        <taxon>Mycobacteriales</taxon>
        <taxon>Mycobacteriaceae</taxon>
        <taxon>Mycobacterium</taxon>
    </lineage>
</organism>
<accession>A3PVV6</accession>
<comment type="function">
    <text evidence="1">Catalyzes the oxidation of 5,10-methylenetetrahydrofolate to 5,10-methenyltetrahydrofolate and then the hydrolysis of 5,10-methenyltetrahydrofolate to 10-formyltetrahydrofolate.</text>
</comment>
<comment type="catalytic activity">
    <reaction evidence="1">
        <text>(6R)-5,10-methylene-5,6,7,8-tetrahydrofolate + NADP(+) = (6R)-5,10-methenyltetrahydrofolate + NADPH</text>
        <dbReference type="Rhea" id="RHEA:22812"/>
        <dbReference type="ChEBI" id="CHEBI:15636"/>
        <dbReference type="ChEBI" id="CHEBI:57455"/>
        <dbReference type="ChEBI" id="CHEBI:57783"/>
        <dbReference type="ChEBI" id="CHEBI:58349"/>
        <dbReference type="EC" id="1.5.1.5"/>
    </reaction>
</comment>
<comment type="catalytic activity">
    <reaction evidence="1">
        <text>(6R)-5,10-methenyltetrahydrofolate + H2O = (6R)-10-formyltetrahydrofolate + H(+)</text>
        <dbReference type="Rhea" id="RHEA:23700"/>
        <dbReference type="ChEBI" id="CHEBI:15377"/>
        <dbReference type="ChEBI" id="CHEBI:15378"/>
        <dbReference type="ChEBI" id="CHEBI:57455"/>
        <dbReference type="ChEBI" id="CHEBI:195366"/>
        <dbReference type="EC" id="3.5.4.9"/>
    </reaction>
</comment>
<comment type="pathway">
    <text evidence="1">One-carbon metabolism; tetrahydrofolate interconversion.</text>
</comment>
<comment type="subunit">
    <text evidence="1">Homodimer.</text>
</comment>
<comment type="similarity">
    <text evidence="1">Belongs to the tetrahydrofolate dehydrogenase/cyclohydrolase family.</text>
</comment>
<protein>
    <recommendedName>
        <fullName evidence="1">Bifunctional protein FolD</fullName>
    </recommendedName>
    <domain>
        <recommendedName>
            <fullName evidence="1">Methylenetetrahydrofolate dehydrogenase</fullName>
            <ecNumber evidence="1">1.5.1.5</ecNumber>
        </recommendedName>
    </domain>
    <domain>
        <recommendedName>
            <fullName evidence="1">Methenyltetrahydrofolate cyclohydrolase</fullName>
            <ecNumber evidence="1">3.5.4.9</ecNumber>
        </recommendedName>
    </domain>
</protein>
<gene>
    <name evidence="1" type="primary">folD</name>
    <name type="ordered locus">Mjls_1231</name>
</gene>